<proteinExistence type="evidence at transcript level"/>
<keyword id="KW-1003">Cell membrane</keyword>
<keyword id="KW-0963">Cytoplasm</keyword>
<keyword id="KW-0443">Lipid metabolism</keyword>
<keyword id="KW-0472">Membrane</keyword>
<keyword id="KW-0521">NADP</keyword>
<keyword id="KW-0560">Oxidoreductase</keyword>
<keyword id="KW-1185">Reference proteome</keyword>
<organism>
    <name type="scientific">Xenopus tropicalis</name>
    <name type="common">Western clawed frog</name>
    <name type="synonym">Silurana tropicalis</name>
    <dbReference type="NCBI Taxonomy" id="8364"/>
    <lineage>
        <taxon>Eukaryota</taxon>
        <taxon>Metazoa</taxon>
        <taxon>Chordata</taxon>
        <taxon>Craniata</taxon>
        <taxon>Vertebrata</taxon>
        <taxon>Euteleostomi</taxon>
        <taxon>Amphibia</taxon>
        <taxon>Batrachia</taxon>
        <taxon>Anura</taxon>
        <taxon>Pipoidea</taxon>
        <taxon>Pipidae</taxon>
        <taxon>Xenopodinae</taxon>
        <taxon>Xenopus</taxon>
        <taxon>Silurana</taxon>
    </lineage>
</organism>
<protein>
    <recommendedName>
        <fullName>Aldo-keto reductase family 1 member A1</fullName>
        <ecNumber evidence="2">1.1.1.2</ecNumber>
    </recommendedName>
    <alternativeName>
        <fullName>Alcohol dehydrogenase [NADP(+)]</fullName>
    </alternativeName>
    <alternativeName>
        <fullName>Aldehyde reductase</fullName>
    </alternativeName>
    <alternativeName>
        <fullName evidence="6">S-nitroso-CoA reductase</fullName>
        <shortName evidence="6">ScorR</shortName>
        <ecNumber evidence="2">1.6.-.-</ecNumber>
    </alternativeName>
</protein>
<feature type="chain" id="PRO_0000384155" description="Aldo-keto reductase family 1 member A1">
    <location>
        <begin position="1"/>
        <end position="327"/>
    </location>
</feature>
<feature type="active site" description="Proton donor" evidence="2">
    <location>
        <position position="52"/>
    </location>
</feature>
<feature type="binding site" evidence="1">
    <location>
        <begin position="13"/>
        <end position="22"/>
    </location>
    <ligand>
        <name>NADP(+)</name>
        <dbReference type="ChEBI" id="CHEBI:58349"/>
    </ligand>
</feature>
<feature type="binding site" evidence="3">
    <location>
        <position position="23"/>
    </location>
    <ligand>
        <name>NADP(+)</name>
        <dbReference type="ChEBI" id="CHEBI:58349"/>
    </ligand>
</feature>
<feature type="binding site" evidence="3">
    <location>
        <position position="24"/>
    </location>
    <ligand>
        <name>NADP(+)</name>
        <dbReference type="ChEBI" id="CHEBI:58349"/>
    </ligand>
</feature>
<feature type="binding site" evidence="3">
    <location>
        <position position="47"/>
    </location>
    <ligand>
        <name>NADP(+)</name>
        <dbReference type="ChEBI" id="CHEBI:58349"/>
    </ligand>
</feature>
<feature type="binding site" evidence="3">
    <location>
        <position position="164"/>
    </location>
    <ligand>
        <name>NADP(+)</name>
        <dbReference type="ChEBI" id="CHEBI:58349"/>
    </ligand>
</feature>
<feature type="binding site" evidence="3">
    <location>
        <position position="165"/>
    </location>
    <ligand>
        <name>NADP(+)</name>
        <dbReference type="ChEBI" id="CHEBI:58349"/>
    </ligand>
</feature>
<feature type="binding site" evidence="3">
    <location>
        <position position="213"/>
    </location>
    <ligand>
        <name>NADP(+)</name>
        <dbReference type="ChEBI" id="CHEBI:58349"/>
    </ligand>
</feature>
<feature type="binding site" evidence="3">
    <location>
        <position position="215"/>
    </location>
    <ligand>
        <name>NADP(+)</name>
        <dbReference type="ChEBI" id="CHEBI:58349"/>
    </ligand>
</feature>
<feature type="binding site" evidence="3">
    <location>
        <position position="217"/>
    </location>
    <ligand>
        <name>NADP(+)</name>
        <dbReference type="ChEBI" id="CHEBI:58349"/>
    </ligand>
</feature>
<feature type="binding site" evidence="3">
    <location>
        <position position="265"/>
    </location>
    <ligand>
        <name>NADP(+)</name>
        <dbReference type="ChEBI" id="CHEBI:58349"/>
    </ligand>
</feature>
<feature type="binding site" evidence="3">
    <location>
        <position position="266"/>
    </location>
    <ligand>
        <name>NADP(+)</name>
        <dbReference type="ChEBI" id="CHEBI:58349"/>
    </ligand>
</feature>
<feature type="binding site" evidence="3">
    <location>
        <position position="267"/>
    </location>
    <ligand>
        <name>NADP(+)</name>
        <dbReference type="ChEBI" id="CHEBI:58349"/>
    </ligand>
</feature>
<feature type="binding site" evidence="3">
    <location>
        <position position="268"/>
    </location>
    <ligand>
        <name>NADP(+)</name>
        <dbReference type="ChEBI" id="CHEBI:58349"/>
    </ligand>
</feature>
<feature type="binding site" evidence="3">
    <location>
        <position position="271"/>
    </location>
    <ligand>
        <name>NADP(+)</name>
        <dbReference type="ChEBI" id="CHEBI:58349"/>
    </ligand>
</feature>
<feature type="binding site" evidence="3">
    <location>
        <position position="274"/>
    </location>
    <ligand>
        <name>NADP(+)</name>
        <dbReference type="ChEBI" id="CHEBI:58349"/>
    </ligand>
</feature>
<feature type="binding site" evidence="3">
    <location>
        <position position="275"/>
    </location>
    <ligand>
        <name>NADP(+)</name>
        <dbReference type="ChEBI" id="CHEBI:58349"/>
    </ligand>
</feature>
<feature type="site" description="Lowers pKa of active site Tyr" evidence="2">
    <location>
        <position position="82"/>
    </location>
</feature>
<gene>
    <name type="primary">akr1a1</name>
    <name type="ORF">TEgg056i02.1</name>
</gene>
<name>AK1A1_XENTR</name>
<comment type="function">
    <text evidence="2 3 4">Catalyzes the NADPH-dependent reduction of a wide variety of carbonyl-containing compounds to their corresponding alcohols. Displays enzymatic activity towards endogenous metabolites such as aromatic and aliphatic aldehydes, ketones, monosaccharides and bile acids. Acts as an aldehyde-detoxification enzyme (By similarity). Also acts as an inhibitor of protein S-nitrosylation by mediating degradation of S-nitroso-coenzyme A (S-nitroso-CoA), a cofactor required to S-nitrosylate proteins (By similarity). Also acts as a S-nitroso-glutathione reductase by catalyzing the NADPH-dependent reduction of S-nitrosoglutathione (By similarity). Displays no reductase activity towards retinoids (By similarity).</text>
</comment>
<comment type="catalytic activity">
    <reaction evidence="2">
        <text>a primary alcohol + NADP(+) = an aldehyde + NADPH + H(+)</text>
        <dbReference type="Rhea" id="RHEA:15937"/>
        <dbReference type="ChEBI" id="CHEBI:15378"/>
        <dbReference type="ChEBI" id="CHEBI:15734"/>
        <dbReference type="ChEBI" id="CHEBI:17478"/>
        <dbReference type="ChEBI" id="CHEBI:57783"/>
        <dbReference type="ChEBI" id="CHEBI:58349"/>
        <dbReference type="EC" id="1.1.1.2"/>
    </reaction>
</comment>
<comment type="catalytic activity">
    <reaction evidence="2">
        <text>S-nitroso-CoA + NADPH + H(+) = sulfinamide-CoA + NADP(+)</text>
        <dbReference type="Rhea" id="RHEA:78375"/>
        <dbReference type="ChEBI" id="CHEBI:15378"/>
        <dbReference type="ChEBI" id="CHEBI:57783"/>
        <dbReference type="ChEBI" id="CHEBI:58349"/>
        <dbReference type="ChEBI" id="CHEBI:145546"/>
        <dbReference type="ChEBI" id="CHEBI:145548"/>
    </reaction>
    <physiologicalReaction direction="left-to-right" evidence="2">
        <dbReference type="Rhea" id="RHEA:78376"/>
    </physiologicalReaction>
</comment>
<comment type="catalytic activity">
    <reaction evidence="5">
        <text>S-nitrosoglutathione + NADPH + H(+) = S-(hydroxysulfenamide)glutathione + NADP(+)</text>
        <dbReference type="Rhea" id="RHEA:63500"/>
        <dbReference type="ChEBI" id="CHEBI:15378"/>
        <dbReference type="ChEBI" id="CHEBI:57783"/>
        <dbReference type="ChEBI" id="CHEBI:58349"/>
        <dbReference type="ChEBI" id="CHEBI:145544"/>
        <dbReference type="ChEBI" id="CHEBI:229723"/>
    </reaction>
</comment>
<comment type="subcellular location">
    <subcellularLocation>
        <location evidence="5">Cytoplasm</location>
        <location evidence="5">Cytosol</location>
    </subcellularLocation>
    <subcellularLocation>
        <location evidence="5">Apical cell membrane</location>
    </subcellularLocation>
</comment>
<comment type="similarity">
    <text evidence="6">Belongs to the aldo/keto reductase family.</text>
</comment>
<sequence length="327" mass="37064">MATAVEYETLYTGQKIPLIGLGTWKSAPGQVKDAVKYALGVGYRHIDCAFVYGNETEVGEAIKESVGSDKGLSREEVFVTSKLWNNKHHPDDVECALRKTLQDLQLDYLDLYLMHWPYAFKRGDQIFPQNPDGSVQYDLTDYKDTWKAMEKLVKQGLTKAIGLSNFNKRQIDDIISIATVKPAVLQVECHPYLAQNELIAYCHAHGLVFTGYSPLGSPDRSWRKPEDPVLLEEPGIIAMAKKYGKSEAQILLRWQVQRKVVSIPKSVTPTRILQNFQVFDFSLSEEEMQLIGALNKNWRYIIPLITVNGKSVPRDAGHPLYPFNDPY</sequence>
<evidence type="ECO:0000250" key="1">
    <source>
        <dbReference type="UniProtKB" id="O60218"/>
    </source>
</evidence>
<evidence type="ECO:0000250" key="2">
    <source>
        <dbReference type="UniProtKB" id="P14550"/>
    </source>
</evidence>
<evidence type="ECO:0000250" key="3">
    <source>
        <dbReference type="UniProtKB" id="P50578"/>
    </source>
</evidence>
<evidence type="ECO:0000250" key="4">
    <source>
        <dbReference type="UniProtKB" id="P51635"/>
    </source>
</evidence>
<evidence type="ECO:0000250" key="5">
    <source>
        <dbReference type="UniProtKB" id="Q9JII6"/>
    </source>
</evidence>
<evidence type="ECO:0000305" key="6"/>
<reference key="1">
    <citation type="submission" date="2006-10" db="EMBL/GenBank/DDBJ databases">
        <authorList>
            <consortium name="Sanger Xenopus tropicalis EST/cDNA project"/>
        </authorList>
    </citation>
    <scope>NUCLEOTIDE SEQUENCE [LARGE SCALE MRNA]</scope>
    <source>
        <tissue>Egg</tissue>
    </source>
</reference>
<reference key="2">
    <citation type="submission" date="2008-11" db="EMBL/GenBank/DDBJ databases">
        <authorList>
            <consortium name="NIH - Xenopus Gene Collection (XGC) project"/>
        </authorList>
    </citation>
    <scope>NUCLEOTIDE SEQUENCE [LARGE SCALE MRNA]</scope>
    <source>
        <tissue>Neurula</tissue>
    </source>
</reference>
<accession>Q28FD1</accession>
<dbReference type="EC" id="1.1.1.2" evidence="2"/>
<dbReference type="EC" id="1.6.-.-" evidence="2"/>
<dbReference type="EMBL" id="CR762028">
    <property type="protein sequence ID" value="CAJ81495.1"/>
    <property type="molecule type" value="mRNA"/>
</dbReference>
<dbReference type="EMBL" id="BC170750">
    <property type="protein sequence ID" value="AAI70750.1"/>
    <property type="molecule type" value="mRNA"/>
</dbReference>
<dbReference type="EMBL" id="BC170752">
    <property type="protein sequence ID" value="AAI70752.1"/>
    <property type="molecule type" value="mRNA"/>
</dbReference>
<dbReference type="RefSeq" id="NP_001016137.1">
    <property type="nucleotide sequence ID" value="NM_001016137.2"/>
</dbReference>
<dbReference type="RefSeq" id="XP_012816517.1">
    <property type="nucleotide sequence ID" value="XM_012961063.3"/>
</dbReference>
<dbReference type="RefSeq" id="XP_012816518.1">
    <property type="nucleotide sequence ID" value="XM_012961064.3"/>
</dbReference>
<dbReference type="RefSeq" id="XP_012816520.1">
    <property type="nucleotide sequence ID" value="XM_012961066.2"/>
</dbReference>
<dbReference type="RefSeq" id="XP_012816521.1">
    <property type="nucleotide sequence ID" value="XM_012961067.3"/>
</dbReference>
<dbReference type="RefSeq" id="XP_017948526.1">
    <property type="nucleotide sequence ID" value="XM_018093037.1"/>
</dbReference>
<dbReference type="SMR" id="Q28FD1"/>
<dbReference type="FunCoup" id="Q28FD1">
    <property type="interactions" value="1038"/>
</dbReference>
<dbReference type="STRING" id="8364.ENSXETP00000025651"/>
<dbReference type="PaxDb" id="8364-ENSXETP00000007570"/>
<dbReference type="GeneID" id="548891"/>
<dbReference type="KEGG" id="xtr:548891"/>
<dbReference type="AGR" id="Xenbase:XB-GENE-1014353"/>
<dbReference type="CTD" id="10327"/>
<dbReference type="Xenbase" id="XB-GENE-1014353">
    <property type="gene designation" value="akr1a1"/>
</dbReference>
<dbReference type="eggNOG" id="KOG1577">
    <property type="taxonomic scope" value="Eukaryota"/>
</dbReference>
<dbReference type="HOGENOM" id="CLU_023205_0_0_1"/>
<dbReference type="InParanoid" id="Q28FD1"/>
<dbReference type="OMA" id="MVNQIFL"/>
<dbReference type="OrthoDB" id="416253at2759"/>
<dbReference type="PhylomeDB" id="Q28FD1"/>
<dbReference type="TreeFam" id="TF106492"/>
<dbReference type="Reactome" id="R-XTR-156590">
    <property type="pathway name" value="Glutathione conjugation"/>
</dbReference>
<dbReference type="Reactome" id="R-XTR-5661270">
    <property type="pathway name" value="Formation of xylulose-5-phosphate"/>
</dbReference>
<dbReference type="Proteomes" id="UP000008143">
    <property type="component" value="Chromosome 4"/>
</dbReference>
<dbReference type="Bgee" id="ENSXETG00000003499">
    <property type="expression patterns" value="Expressed in mesonephros and 16 other cell types or tissues"/>
</dbReference>
<dbReference type="GO" id="GO:0016324">
    <property type="term" value="C:apical plasma membrane"/>
    <property type="evidence" value="ECO:0000250"/>
    <property type="project" value="UniProtKB"/>
</dbReference>
<dbReference type="GO" id="GO:0005829">
    <property type="term" value="C:cytosol"/>
    <property type="evidence" value="ECO:0000250"/>
    <property type="project" value="UniProtKB"/>
</dbReference>
<dbReference type="GO" id="GO:0008106">
    <property type="term" value="F:alcohol dehydrogenase (NADP+) activity"/>
    <property type="evidence" value="ECO:0007669"/>
    <property type="project" value="UniProtKB-EC"/>
</dbReference>
<dbReference type="GO" id="GO:0160163">
    <property type="term" value="F:S-nitrosoglutathione reductase (NADPH) activity"/>
    <property type="evidence" value="ECO:0007669"/>
    <property type="project" value="RHEA"/>
</dbReference>
<dbReference type="GO" id="GO:0046185">
    <property type="term" value="P:aldehyde catabolic process"/>
    <property type="evidence" value="ECO:0007669"/>
    <property type="project" value="InterPro"/>
</dbReference>
<dbReference type="GO" id="GO:0110095">
    <property type="term" value="P:cellular detoxification of aldehyde"/>
    <property type="evidence" value="ECO:0000250"/>
    <property type="project" value="UniProtKB"/>
</dbReference>
<dbReference type="GO" id="GO:0006629">
    <property type="term" value="P:lipid metabolic process"/>
    <property type="evidence" value="ECO:0007669"/>
    <property type="project" value="UniProtKB-KW"/>
</dbReference>
<dbReference type="CDD" id="cd19106">
    <property type="entry name" value="AKR_AKR1A1-4"/>
    <property type="match status" value="1"/>
</dbReference>
<dbReference type="FunFam" id="3.20.20.100:FF:000006">
    <property type="entry name" value="Aldo-keto reductase family 1 member A1"/>
    <property type="match status" value="1"/>
</dbReference>
<dbReference type="Gene3D" id="3.20.20.100">
    <property type="entry name" value="NADP-dependent oxidoreductase domain"/>
    <property type="match status" value="1"/>
</dbReference>
<dbReference type="InterPro" id="IPR020471">
    <property type="entry name" value="AKR"/>
</dbReference>
<dbReference type="InterPro" id="IPR044481">
    <property type="entry name" value="AKR1A"/>
</dbReference>
<dbReference type="InterPro" id="IPR018170">
    <property type="entry name" value="Aldo/ket_reductase_CS"/>
</dbReference>
<dbReference type="InterPro" id="IPR023210">
    <property type="entry name" value="NADP_OxRdtase_dom"/>
</dbReference>
<dbReference type="InterPro" id="IPR036812">
    <property type="entry name" value="NADP_OxRdtase_dom_sf"/>
</dbReference>
<dbReference type="PANTHER" id="PTHR11732">
    <property type="entry name" value="ALDO/KETO REDUCTASE"/>
    <property type="match status" value="1"/>
</dbReference>
<dbReference type="Pfam" id="PF00248">
    <property type="entry name" value="Aldo_ket_red"/>
    <property type="match status" value="1"/>
</dbReference>
<dbReference type="PIRSF" id="PIRSF000097">
    <property type="entry name" value="AKR"/>
    <property type="match status" value="1"/>
</dbReference>
<dbReference type="PRINTS" id="PR00069">
    <property type="entry name" value="ALDKETRDTASE"/>
</dbReference>
<dbReference type="SUPFAM" id="SSF51430">
    <property type="entry name" value="NAD(P)-linked oxidoreductase"/>
    <property type="match status" value="1"/>
</dbReference>
<dbReference type="PROSITE" id="PS00798">
    <property type="entry name" value="ALDOKETO_REDUCTASE_1"/>
    <property type="match status" value="1"/>
</dbReference>
<dbReference type="PROSITE" id="PS00062">
    <property type="entry name" value="ALDOKETO_REDUCTASE_2"/>
    <property type="match status" value="1"/>
</dbReference>
<dbReference type="PROSITE" id="PS00063">
    <property type="entry name" value="ALDOKETO_REDUCTASE_3"/>
    <property type="match status" value="1"/>
</dbReference>